<dbReference type="EC" id="2.7.7.8" evidence="1"/>
<dbReference type="EMBL" id="AE000513">
    <property type="protein sequence ID" value="AAF11608.1"/>
    <property type="status" value="ALT_INIT"/>
    <property type="molecule type" value="Genomic_DNA"/>
</dbReference>
<dbReference type="PIR" id="G75320">
    <property type="entry name" value="G75320"/>
</dbReference>
<dbReference type="RefSeq" id="NP_295786.1">
    <property type="nucleotide sequence ID" value="NC_001263.1"/>
</dbReference>
<dbReference type="RefSeq" id="WP_027479957.1">
    <property type="nucleotide sequence ID" value="NC_001263.1"/>
</dbReference>
<dbReference type="SMR" id="Q9RSR1"/>
<dbReference type="DIP" id="DIP-58603N"/>
<dbReference type="FunCoup" id="Q9RSR1">
    <property type="interactions" value="483"/>
</dbReference>
<dbReference type="IntAct" id="Q9RSR1">
    <property type="interactions" value="1"/>
</dbReference>
<dbReference type="STRING" id="243230.DR_2063"/>
<dbReference type="PaxDb" id="243230-DR_2063"/>
<dbReference type="EnsemblBacteria" id="AAF11608">
    <property type="protein sequence ID" value="AAF11608"/>
    <property type="gene ID" value="DR_2063"/>
</dbReference>
<dbReference type="GeneID" id="69518306"/>
<dbReference type="KEGG" id="dra:DR_2063"/>
<dbReference type="PATRIC" id="fig|243230.17.peg.2288"/>
<dbReference type="eggNOG" id="COG1185">
    <property type="taxonomic scope" value="Bacteria"/>
</dbReference>
<dbReference type="HOGENOM" id="CLU_004217_2_2_0"/>
<dbReference type="InParanoid" id="Q9RSR1"/>
<dbReference type="OrthoDB" id="9804305at2"/>
<dbReference type="Proteomes" id="UP000002524">
    <property type="component" value="Chromosome 1"/>
</dbReference>
<dbReference type="GO" id="GO:0005829">
    <property type="term" value="C:cytosol"/>
    <property type="evidence" value="ECO:0000318"/>
    <property type="project" value="GO_Central"/>
</dbReference>
<dbReference type="GO" id="GO:0000175">
    <property type="term" value="F:3'-5'-RNA exonuclease activity"/>
    <property type="evidence" value="ECO:0000318"/>
    <property type="project" value="GO_Central"/>
</dbReference>
<dbReference type="GO" id="GO:0000287">
    <property type="term" value="F:magnesium ion binding"/>
    <property type="evidence" value="ECO:0007669"/>
    <property type="project" value="UniProtKB-UniRule"/>
</dbReference>
<dbReference type="GO" id="GO:0004654">
    <property type="term" value="F:polyribonucleotide nucleotidyltransferase activity"/>
    <property type="evidence" value="ECO:0000318"/>
    <property type="project" value="GO_Central"/>
</dbReference>
<dbReference type="GO" id="GO:0003723">
    <property type="term" value="F:RNA binding"/>
    <property type="evidence" value="ECO:0007669"/>
    <property type="project" value="UniProtKB-UniRule"/>
</dbReference>
<dbReference type="GO" id="GO:0006402">
    <property type="term" value="P:mRNA catabolic process"/>
    <property type="evidence" value="ECO:0007669"/>
    <property type="project" value="UniProtKB-UniRule"/>
</dbReference>
<dbReference type="GO" id="GO:0006401">
    <property type="term" value="P:RNA catabolic process"/>
    <property type="evidence" value="ECO:0000318"/>
    <property type="project" value="GO_Central"/>
</dbReference>
<dbReference type="GO" id="GO:0006396">
    <property type="term" value="P:RNA processing"/>
    <property type="evidence" value="ECO:0007669"/>
    <property type="project" value="InterPro"/>
</dbReference>
<dbReference type="CDD" id="cd02393">
    <property type="entry name" value="KH-I_PNPase"/>
    <property type="match status" value="1"/>
</dbReference>
<dbReference type="CDD" id="cd11363">
    <property type="entry name" value="RNase_PH_PNPase_1"/>
    <property type="match status" value="1"/>
</dbReference>
<dbReference type="CDD" id="cd11364">
    <property type="entry name" value="RNase_PH_PNPase_2"/>
    <property type="match status" value="1"/>
</dbReference>
<dbReference type="CDD" id="cd04472">
    <property type="entry name" value="S1_PNPase"/>
    <property type="match status" value="1"/>
</dbReference>
<dbReference type="FunFam" id="3.30.1370.10:FF:000001">
    <property type="entry name" value="Polyribonucleotide nucleotidyltransferase"/>
    <property type="match status" value="1"/>
</dbReference>
<dbReference type="FunFam" id="3.30.230.70:FF:000001">
    <property type="entry name" value="Polyribonucleotide nucleotidyltransferase"/>
    <property type="match status" value="1"/>
</dbReference>
<dbReference type="FunFam" id="3.30.230.70:FF:000002">
    <property type="entry name" value="Polyribonucleotide nucleotidyltransferase"/>
    <property type="match status" value="1"/>
</dbReference>
<dbReference type="FunFam" id="2.40.50.140:FF:000189">
    <property type="entry name" value="Polyribonucleotide nucleotidyltransferase, putative"/>
    <property type="match status" value="1"/>
</dbReference>
<dbReference type="Gene3D" id="3.30.230.70">
    <property type="entry name" value="GHMP Kinase, N-terminal domain"/>
    <property type="match status" value="2"/>
</dbReference>
<dbReference type="Gene3D" id="3.30.1370.10">
    <property type="entry name" value="K Homology domain, type 1"/>
    <property type="match status" value="1"/>
</dbReference>
<dbReference type="Gene3D" id="2.40.50.140">
    <property type="entry name" value="Nucleic acid-binding proteins"/>
    <property type="match status" value="1"/>
</dbReference>
<dbReference type="HAMAP" id="MF_01595">
    <property type="entry name" value="PNPase"/>
    <property type="match status" value="1"/>
</dbReference>
<dbReference type="InterPro" id="IPR001247">
    <property type="entry name" value="ExoRNase_PH_dom1"/>
</dbReference>
<dbReference type="InterPro" id="IPR015847">
    <property type="entry name" value="ExoRNase_PH_dom2"/>
</dbReference>
<dbReference type="InterPro" id="IPR036345">
    <property type="entry name" value="ExoRNase_PH_dom2_sf"/>
</dbReference>
<dbReference type="InterPro" id="IPR004087">
    <property type="entry name" value="KH_dom"/>
</dbReference>
<dbReference type="InterPro" id="IPR004088">
    <property type="entry name" value="KH_dom_type_1"/>
</dbReference>
<dbReference type="InterPro" id="IPR036612">
    <property type="entry name" value="KH_dom_type_1_sf"/>
</dbReference>
<dbReference type="InterPro" id="IPR012340">
    <property type="entry name" value="NA-bd_OB-fold"/>
</dbReference>
<dbReference type="InterPro" id="IPR012162">
    <property type="entry name" value="PNPase"/>
</dbReference>
<dbReference type="InterPro" id="IPR027408">
    <property type="entry name" value="PNPase/RNase_PH_dom_sf"/>
</dbReference>
<dbReference type="InterPro" id="IPR015848">
    <property type="entry name" value="PNPase_PH_RNA-bd_bac/org-type"/>
</dbReference>
<dbReference type="InterPro" id="IPR020568">
    <property type="entry name" value="Ribosomal_Su5_D2-typ_SF"/>
</dbReference>
<dbReference type="InterPro" id="IPR003029">
    <property type="entry name" value="S1_domain"/>
</dbReference>
<dbReference type="NCBIfam" id="TIGR03591">
    <property type="entry name" value="polynuc_phos"/>
    <property type="match status" value="1"/>
</dbReference>
<dbReference type="NCBIfam" id="NF008805">
    <property type="entry name" value="PRK11824.1"/>
    <property type="match status" value="1"/>
</dbReference>
<dbReference type="PANTHER" id="PTHR11252">
    <property type="entry name" value="POLYRIBONUCLEOTIDE NUCLEOTIDYLTRANSFERASE"/>
    <property type="match status" value="1"/>
</dbReference>
<dbReference type="PANTHER" id="PTHR11252:SF0">
    <property type="entry name" value="POLYRIBONUCLEOTIDE NUCLEOTIDYLTRANSFERASE 1, MITOCHONDRIAL"/>
    <property type="match status" value="1"/>
</dbReference>
<dbReference type="Pfam" id="PF00013">
    <property type="entry name" value="KH_1"/>
    <property type="match status" value="1"/>
</dbReference>
<dbReference type="Pfam" id="PF03726">
    <property type="entry name" value="PNPase"/>
    <property type="match status" value="1"/>
</dbReference>
<dbReference type="Pfam" id="PF01138">
    <property type="entry name" value="RNase_PH"/>
    <property type="match status" value="2"/>
</dbReference>
<dbReference type="Pfam" id="PF03725">
    <property type="entry name" value="RNase_PH_C"/>
    <property type="match status" value="2"/>
</dbReference>
<dbReference type="Pfam" id="PF00575">
    <property type="entry name" value="S1"/>
    <property type="match status" value="1"/>
</dbReference>
<dbReference type="PIRSF" id="PIRSF005499">
    <property type="entry name" value="PNPase"/>
    <property type="match status" value="1"/>
</dbReference>
<dbReference type="SMART" id="SM00322">
    <property type="entry name" value="KH"/>
    <property type="match status" value="1"/>
</dbReference>
<dbReference type="SMART" id="SM00316">
    <property type="entry name" value="S1"/>
    <property type="match status" value="1"/>
</dbReference>
<dbReference type="SUPFAM" id="SSF54791">
    <property type="entry name" value="Eukaryotic type KH-domain (KH-domain type I)"/>
    <property type="match status" value="1"/>
</dbReference>
<dbReference type="SUPFAM" id="SSF50249">
    <property type="entry name" value="Nucleic acid-binding proteins"/>
    <property type="match status" value="1"/>
</dbReference>
<dbReference type="SUPFAM" id="SSF55666">
    <property type="entry name" value="Ribonuclease PH domain 2-like"/>
    <property type="match status" value="2"/>
</dbReference>
<dbReference type="SUPFAM" id="SSF54211">
    <property type="entry name" value="Ribosomal protein S5 domain 2-like"/>
    <property type="match status" value="2"/>
</dbReference>
<dbReference type="PROSITE" id="PS50084">
    <property type="entry name" value="KH_TYPE_1"/>
    <property type="match status" value="1"/>
</dbReference>
<dbReference type="PROSITE" id="PS50126">
    <property type="entry name" value="S1"/>
    <property type="match status" value="1"/>
</dbReference>
<organism>
    <name type="scientific">Deinococcus radiodurans (strain ATCC 13939 / DSM 20539 / JCM 16871 / CCUG 27074 / LMG 4051 / NBRC 15346 / NCIMB 9279 / VKM B-1422 / R1)</name>
    <dbReference type="NCBI Taxonomy" id="243230"/>
    <lineage>
        <taxon>Bacteria</taxon>
        <taxon>Thermotogati</taxon>
        <taxon>Deinococcota</taxon>
        <taxon>Deinococci</taxon>
        <taxon>Deinococcales</taxon>
        <taxon>Deinococcaceae</taxon>
        <taxon>Deinococcus</taxon>
    </lineage>
</organism>
<comment type="function">
    <text evidence="1">Involved in mRNA degradation. Catalyzes the phosphorolysis of single-stranded polyribonucleotides processively in the 3'- to 5'-direction.</text>
</comment>
<comment type="catalytic activity">
    <reaction evidence="1">
        <text>RNA(n+1) + phosphate = RNA(n) + a ribonucleoside 5'-diphosphate</text>
        <dbReference type="Rhea" id="RHEA:22096"/>
        <dbReference type="Rhea" id="RHEA-COMP:14527"/>
        <dbReference type="Rhea" id="RHEA-COMP:17342"/>
        <dbReference type="ChEBI" id="CHEBI:43474"/>
        <dbReference type="ChEBI" id="CHEBI:57930"/>
        <dbReference type="ChEBI" id="CHEBI:140395"/>
        <dbReference type="EC" id="2.7.7.8"/>
    </reaction>
</comment>
<comment type="cofactor">
    <cofactor evidence="1">
        <name>Mg(2+)</name>
        <dbReference type="ChEBI" id="CHEBI:18420"/>
    </cofactor>
</comment>
<comment type="interaction">
    <interactant intactId="EBI-15836673">
        <id>Q9RSR1</id>
    </interactant>
    <interactant intactId="EBI-15836588">
        <id>Q9RUW8</id>
        <label>rsr</label>
    </interactant>
    <organismsDiffer>false</organismsDiffer>
    <experiments>2</experiments>
</comment>
<comment type="subcellular location">
    <subcellularLocation>
        <location evidence="1">Cytoplasm</location>
    </subcellularLocation>
</comment>
<comment type="similarity">
    <text evidence="1">Belongs to the polyribonucleotide nucleotidyltransferase family.</text>
</comment>
<comment type="sequence caution" evidence="3">
    <conflict type="erroneous initiation">
        <sequence resource="EMBL-CDS" id="AAF11608"/>
    </conflict>
</comment>
<evidence type="ECO:0000255" key="1">
    <source>
        <dbReference type="HAMAP-Rule" id="MF_01595"/>
    </source>
</evidence>
<evidence type="ECO:0000256" key="2">
    <source>
        <dbReference type="SAM" id="MobiDB-lite"/>
    </source>
</evidence>
<evidence type="ECO:0000305" key="3"/>
<gene>
    <name evidence="1" type="primary">pnp</name>
    <name type="ordered locus">DR_2063</name>
</gene>
<sequence length="779" mass="84062">MIGKTFTTMLGGRELSIETGKLAKLVSGSVTVRYGDTLLLVTAQASDTQSKLDFLPLTVEFEERHYAVGKIPGSFQRREGRPGEKAILSARITDRQIRPLFPKGYRHETQVIITVLSADGQNAPDVLGPIGAAAALSISDIPWAGPTACVRVGQIDGQYVVNPTTEQLTRSRMDLVVAGTREAVMMVECGAQTVSEDDLVGAIEFAHAEMQGVIALIEQMRAEVGHEKFNFLAEEGPANDYVPELTEKAKAAGLRDALLTHGKKDRSARLKALRNGLIEGYVPDPTAEGSAELTQALKDAFGKVEKRELRRLILEENLRADGRDSKTVRPIWIEARPLPTAHGSAVFTRGETQVLGVTTLGTERDEILIDDLTAESGDKFLLHYNFPPYSTGEVKRMGGQSRREIGHGNLAKRAIRAVLPSFEEFPYVIRVVGDVLESNGSSSMGTVCAGTLSLMDAGVPLKAPVAGVAMGLVMEGDNYRVLTDILGLEDALGDMDFKVCGTAEGVTALQMDIKVGGITPQIMREALAQAKEGRLHILGKMAEVLAAPRAELSPTAPHILSLKINPELIGKVIGPGGKQVRELEAMGAQVTIEEDGTVRIFSASGESAEAVKARIEAVTKEAKVGEEFEGTVVKIAPFGAFVNLFPGQDGMLHISQLSEQRVENVEDVLTVGDKLKVKIANIDDRGKIDLIRPELEGKVPLREPRAPRGGDRGPRRDSDRGGDRGPRREFSDRGPRPEGARSERPEGQRTERPATAPATQESSQSSDAPAAPVFPRRED</sequence>
<keyword id="KW-0963">Cytoplasm</keyword>
<keyword id="KW-0460">Magnesium</keyword>
<keyword id="KW-0479">Metal-binding</keyword>
<keyword id="KW-0548">Nucleotidyltransferase</keyword>
<keyword id="KW-1185">Reference proteome</keyword>
<keyword id="KW-0694">RNA-binding</keyword>
<keyword id="KW-0808">Transferase</keyword>
<feature type="chain" id="PRO_0000329621" description="Polyribonucleotide nucleotidyltransferase">
    <location>
        <begin position="1"/>
        <end position="779"/>
    </location>
</feature>
<feature type="domain" description="KH" evidence="1">
    <location>
        <begin position="557"/>
        <end position="618"/>
    </location>
</feature>
<feature type="domain" description="S1 motif" evidence="1">
    <location>
        <begin position="625"/>
        <end position="693"/>
    </location>
</feature>
<feature type="region of interest" description="Disordered" evidence="2">
    <location>
        <begin position="699"/>
        <end position="779"/>
    </location>
</feature>
<feature type="compositionally biased region" description="Basic and acidic residues" evidence="2">
    <location>
        <begin position="699"/>
        <end position="752"/>
    </location>
</feature>
<feature type="compositionally biased region" description="Polar residues" evidence="2">
    <location>
        <begin position="757"/>
        <end position="767"/>
    </location>
</feature>
<feature type="binding site" evidence="1">
    <location>
        <position position="490"/>
    </location>
    <ligand>
        <name>Mg(2+)</name>
        <dbReference type="ChEBI" id="CHEBI:18420"/>
    </ligand>
</feature>
<feature type="binding site" evidence="1">
    <location>
        <position position="496"/>
    </location>
    <ligand>
        <name>Mg(2+)</name>
        <dbReference type="ChEBI" id="CHEBI:18420"/>
    </ligand>
</feature>
<accession>Q9RSR1</accession>
<reference key="1">
    <citation type="journal article" date="1999" name="Science">
        <title>Genome sequence of the radioresistant bacterium Deinococcus radiodurans R1.</title>
        <authorList>
            <person name="White O."/>
            <person name="Eisen J.A."/>
            <person name="Heidelberg J.F."/>
            <person name="Hickey E.K."/>
            <person name="Peterson J.D."/>
            <person name="Dodson R.J."/>
            <person name="Haft D.H."/>
            <person name="Gwinn M.L."/>
            <person name="Nelson W.C."/>
            <person name="Richardson D.L."/>
            <person name="Moffat K.S."/>
            <person name="Qin H."/>
            <person name="Jiang L."/>
            <person name="Pamphile W."/>
            <person name="Crosby M."/>
            <person name="Shen M."/>
            <person name="Vamathevan J.J."/>
            <person name="Lam P."/>
            <person name="McDonald L.A."/>
            <person name="Utterback T.R."/>
            <person name="Zalewski C."/>
            <person name="Makarova K.S."/>
            <person name="Aravind L."/>
            <person name="Daly M.J."/>
            <person name="Minton K.W."/>
            <person name="Fleischmann R.D."/>
            <person name="Ketchum K.A."/>
            <person name="Nelson K.E."/>
            <person name="Salzberg S.L."/>
            <person name="Smith H.O."/>
            <person name="Venter J.C."/>
            <person name="Fraser C.M."/>
        </authorList>
    </citation>
    <scope>NUCLEOTIDE SEQUENCE [LARGE SCALE GENOMIC DNA]</scope>
    <source>
        <strain>ATCC 13939 / DSM 20539 / JCM 16871 / CCUG 27074 / LMG 4051 / NBRC 15346 / NCIMB 9279 / VKM B-1422 / R1</strain>
    </source>
</reference>
<proteinExistence type="evidence at protein level"/>
<name>PNP_DEIRA</name>
<protein>
    <recommendedName>
        <fullName evidence="1">Polyribonucleotide nucleotidyltransferase</fullName>
        <ecNumber evidence="1">2.7.7.8</ecNumber>
    </recommendedName>
    <alternativeName>
        <fullName evidence="1">Polynucleotide phosphorylase</fullName>
        <shortName evidence="1">PNPase</shortName>
    </alternativeName>
</protein>